<gene>
    <name evidence="1" type="primary">nuoK</name>
    <name type="ordered locus">Bcer98_3812</name>
</gene>
<organism>
    <name type="scientific">Bacillus cytotoxicus (strain DSM 22905 / CIP 110041 / 391-98 / NVH 391-98)</name>
    <dbReference type="NCBI Taxonomy" id="315749"/>
    <lineage>
        <taxon>Bacteria</taxon>
        <taxon>Bacillati</taxon>
        <taxon>Bacillota</taxon>
        <taxon>Bacilli</taxon>
        <taxon>Bacillales</taxon>
        <taxon>Bacillaceae</taxon>
        <taxon>Bacillus</taxon>
        <taxon>Bacillus cereus group</taxon>
    </lineage>
</organism>
<evidence type="ECO:0000255" key="1">
    <source>
        <dbReference type="HAMAP-Rule" id="MF_01456"/>
    </source>
</evidence>
<dbReference type="EC" id="7.1.1.-" evidence="1"/>
<dbReference type="EMBL" id="CP000764">
    <property type="protein sequence ID" value="ABS24002.1"/>
    <property type="molecule type" value="Genomic_DNA"/>
</dbReference>
<dbReference type="RefSeq" id="WP_012096260.1">
    <property type="nucleotide sequence ID" value="NC_009674.1"/>
</dbReference>
<dbReference type="SMR" id="A7GV44"/>
<dbReference type="STRING" id="315749.Bcer98_3812"/>
<dbReference type="GeneID" id="33899053"/>
<dbReference type="KEGG" id="bcy:Bcer98_3812"/>
<dbReference type="eggNOG" id="COG0713">
    <property type="taxonomic scope" value="Bacteria"/>
</dbReference>
<dbReference type="HOGENOM" id="CLU_144724_0_0_9"/>
<dbReference type="OrthoDB" id="9810120at2"/>
<dbReference type="Proteomes" id="UP000002300">
    <property type="component" value="Chromosome"/>
</dbReference>
<dbReference type="GO" id="GO:0030964">
    <property type="term" value="C:NADH dehydrogenase complex"/>
    <property type="evidence" value="ECO:0007669"/>
    <property type="project" value="TreeGrafter"/>
</dbReference>
<dbReference type="GO" id="GO:0005886">
    <property type="term" value="C:plasma membrane"/>
    <property type="evidence" value="ECO:0007669"/>
    <property type="project" value="UniProtKB-SubCell"/>
</dbReference>
<dbReference type="GO" id="GO:0050136">
    <property type="term" value="F:NADH:ubiquinone reductase (non-electrogenic) activity"/>
    <property type="evidence" value="ECO:0007669"/>
    <property type="project" value="UniProtKB-UniRule"/>
</dbReference>
<dbReference type="GO" id="GO:0048038">
    <property type="term" value="F:quinone binding"/>
    <property type="evidence" value="ECO:0007669"/>
    <property type="project" value="UniProtKB-KW"/>
</dbReference>
<dbReference type="GO" id="GO:0042773">
    <property type="term" value="P:ATP synthesis coupled electron transport"/>
    <property type="evidence" value="ECO:0007669"/>
    <property type="project" value="InterPro"/>
</dbReference>
<dbReference type="FunFam" id="1.10.287.3510:FF:000001">
    <property type="entry name" value="NADH-quinone oxidoreductase subunit K"/>
    <property type="match status" value="1"/>
</dbReference>
<dbReference type="Gene3D" id="1.10.287.3510">
    <property type="match status" value="1"/>
</dbReference>
<dbReference type="HAMAP" id="MF_01456">
    <property type="entry name" value="NDH1_NuoK"/>
    <property type="match status" value="1"/>
</dbReference>
<dbReference type="InterPro" id="IPR001133">
    <property type="entry name" value="NADH_UbQ_OxRdtase_chain4L/K"/>
</dbReference>
<dbReference type="InterPro" id="IPR039428">
    <property type="entry name" value="NUOK/Mnh_C1-like"/>
</dbReference>
<dbReference type="NCBIfam" id="NF004320">
    <property type="entry name" value="PRK05715.1-2"/>
    <property type="match status" value="1"/>
</dbReference>
<dbReference type="NCBIfam" id="NF004321">
    <property type="entry name" value="PRK05715.1-3"/>
    <property type="match status" value="1"/>
</dbReference>
<dbReference type="NCBIfam" id="NF004322">
    <property type="entry name" value="PRK05715.1-4"/>
    <property type="match status" value="1"/>
</dbReference>
<dbReference type="NCBIfam" id="NF004323">
    <property type="entry name" value="PRK05715.1-5"/>
    <property type="match status" value="1"/>
</dbReference>
<dbReference type="PANTHER" id="PTHR11434:SF16">
    <property type="entry name" value="NADH-UBIQUINONE OXIDOREDUCTASE CHAIN 4L"/>
    <property type="match status" value="1"/>
</dbReference>
<dbReference type="PANTHER" id="PTHR11434">
    <property type="entry name" value="NADH-UBIQUINONE OXIDOREDUCTASE SUBUNIT ND4L"/>
    <property type="match status" value="1"/>
</dbReference>
<dbReference type="Pfam" id="PF00420">
    <property type="entry name" value="Oxidored_q2"/>
    <property type="match status" value="1"/>
</dbReference>
<keyword id="KW-1003">Cell membrane</keyword>
<keyword id="KW-0472">Membrane</keyword>
<keyword id="KW-0520">NAD</keyword>
<keyword id="KW-0874">Quinone</keyword>
<keyword id="KW-1278">Translocase</keyword>
<keyword id="KW-0812">Transmembrane</keyword>
<keyword id="KW-1133">Transmembrane helix</keyword>
<keyword id="KW-0813">Transport</keyword>
<feature type="chain" id="PRO_5000266776" description="NADH-quinone oxidoreductase subunit K">
    <location>
        <begin position="1"/>
        <end position="104"/>
    </location>
</feature>
<feature type="transmembrane region" description="Helical" evidence="1">
    <location>
        <begin position="4"/>
        <end position="24"/>
    </location>
</feature>
<feature type="transmembrane region" description="Helical" evidence="1">
    <location>
        <begin position="31"/>
        <end position="51"/>
    </location>
</feature>
<feature type="transmembrane region" description="Helical" evidence="1">
    <location>
        <begin position="67"/>
        <end position="87"/>
    </location>
</feature>
<sequence>MNSVPASAYLTLAIILFCIGLFGALTKRNTVIVLVCMELMLNAANLNLVAFSKLGFFPNLTGQIFSLFTMSVAAAEAAVGLAILIALYRNRTTVNIDEMDKLKG</sequence>
<protein>
    <recommendedName>
        <fullName evidence="1">NADH-quinone oxidoreductase subunit K</fullName>
        <ecNumber evidence="1">7.1.1.-</ecNumber>
    </recommendedName>
    <alternativeName>
        <fullName evidence="1">NADH dehydrogenase I subunit K</fullName>
    </alternativeName>
    <alternativeName>
        <fullName evidence="1">NDH-1 subunit K</fullName>
    </alternativeName>
</protein>
<reference key="1">
    <citation type="journal article" date="2008" name="Chem. Biol. Interact.">
        <title>Extending the Bacillus cereus group genomics to putative food-borne pathogens of different toxicity.</title>
        <authorList>
            <person name="Lapidus A."/>
            <person name="Goltsman E."/>
            <person name="Auger S."/>
            <person name="Galleron N."/>
            <person name="Segurens B."/>
            <person name="Dossat C."/>
            <person name="Land M.L."/>
            <person name="Broussolle V."/>
            <person name="Brillard J."/>
            <person name="Guinebretiere M.-H."/>
            <person name="Sanchis V."/>
            <person name="Nguen-the C."/>
            <person name="Lereclus D."/>
            <person name="Richardson P."/>
            <person name="Wincker P."/>
            <person name="Weissenbach J."/>
            <person name="Ehrlich S.D."/>
            <person name="Sorokin A."/>
        </authorList>
    </citation>
    <scope>NUCLEOTIDE SEQUENCE [LARGE SCALE GENOMIC DNA]</scope>
    <source>
        <strain>DSM 22905 / CIP 110041 / 391-98 / NVH 391-98</strain>
    </source>
</reference>
<accession>A7GV44</accession>
<comment type="function">
    <text evidence="1">NDH-1 shuttles electrons from NADH, via FMN and iron-sulfur (Fe-S) centers, to quinones in the respiratory chain. The immediate electron acceptor for the enzyme in this species is believed to be a menaquinone. Couples the redox reaction to proton translocation (for every two electrons transferred, four hydrogen ions are translocated across the cytoplasmic membrane), and thus conserves the redox energy in a proton gradient.</text>
</comment>
<comment type="catalytic activity">
    <reaction evidence="1">
        <text>a quinone + NADH + 5 H(+)(in) = a quinol + NAD(+) + 4 H(+)(out)</text>
        <dbReference type="Rhea" id="RHEA:57888"/>
        <dbReference type="ChEBI" id="CHEBI:15378"/>
        <dbReference type="ChEBI" id="CHEBI:24646"/>
        <dbReference type="ChEBI" id="CHEBI:57540"/>
        <dbReference type="ChEBI" id="CHEBI:57945"/>
        <dbReference type="ChEBI" id="CHEBI:132124"/>
    </reaction>
</comment>
<comment type="subunit">
    <text evidence="1">NDH-1 is composed of 14 different subunits. Subunits NuoA, H, J, K, L, M, N constitute the membrane sector of the complex.</text>
</comment>
<comment type="subcellular location">
    <subcellularLocation>
        <location evidence="1">Cell membrane</location>
        <topology evidence="1">Multi-pass membrane protein</topology>
    </subcellularLocation>
</comment>
<comment type="similarity">
    <text evidence="1">Belongs to the complex I subunit 4L family.</text>
</comment>
<name>NUOK_BACCN</name>
<proteinExistence type="inferred from homology"/>